<comment type="function">
    <text evidence="1">DNA-dependent RNA polymerase catalyzes the transcription of DNA into RNA using the four ribonucleoside triphosphates as substrates.</text>
</comment>
<comment type="catalytic activity">
    <reaction evidence="1">
        <text>RNA(n) + a ribonucleoside 5'-triphosphate = RNA(n+1) + diphosphate</text>
        <dbReference type="Rhea" id="RHEA:21248"/>
        <dbReference type="Rhea" id="RHEA-COMP:14527"/>
        <dbReference type="Rhea" id="RHEA-COMP:17342"/>
        <dbReference type="ChEBI" id="CHEBI:33019"/>
        <dbReference type="ChEBI" id="CHEBI:61557"/>
        <dbReference type="ChEBI" id="CHEBI:140395"/>
        <dbReference type="EC" id="2.7.7.6"/>
    </reaction>
</comment>
<comment type="subunit">
    <text evidence="1">Homodimer. The RNAP catalytic core consists of 2 alpha, 1 beta, 1 beta' and 1 omega subunit. When a sigma factor is associated with the core the holoenzyme is formed, which can initiate transcription.</text>
</comment>
<comment type="domain">
    <text evidence="1">The N-terminal domain is essential for RNAP assembly and basal transcription, whereas the C-terminal domain is involved in interaction with transcriptional regulators and with upstream promoter elements.</text>
</comment>
<comment type="similarity">
    <text evidence="1">Belongs to the RNA polymerase alpha chain family.</text>
</comment>
<evidence type="ECO:0000255" key="1">
    <source>
        <dbReference type="HAMAP-Rule" id="MF_00059"/>
    </source>
</evidence>
<reference key="1">
    <citation type="journal article" date="2004" name="J. Bacteriol.">
        <title>Comparative genomics of two Leptospira interrogans serovars reveals novel insights into physiology and pathogenesis.</title>
        <authorList>
            <person name="Nascimento A.L.T.O."/>
            <person name="Ko A.I."/>
            <person name="Martins E.A.L."/>
            <person name="Monteiro-Vitorello C.B."/>
            <person name="Ho P.L."/>
            <person name="Haake D.A."/>
            <person name="Verjovski-Almeida S."/>
            <person name="Hartskeerl R.A."/>
            <person name="Marques M.V."/>
            <person name="Oliveira M.C."/>
            <person name="Menck C.F.M."/>
            <person name="Leite L.C.C."/>
            <person name="Carrer H."/>
            <person name="Coutinho L.L."/>
            <person name="Degrave W.M."/>
            <person name="Dellagostin O.A."/>
            <person name="El-Dorry H."/>
            <person name="Ferro E.S."/>
            <person name="Ferro M.I.T."/>
            <person name="Furlan L.R."/>
            <person name="Gamberini M."/>
            <person name="Giglioti E.A."/>
            <person name="Goes-Neto A."/>
            <person name="Goldman G.H."/>
            <person name="Goldman M.H.S."/>
            <person name="Harakava R."/>
            <person name="Jeronimo S.M.B."/>
            <person name="Junqueira-de-Azevedo I.L.M."/>
            <person name="Kimura E.T."/>
            <person name="Kuramae E.E."/>
            <person name="Lemos E.G.M."/>
            <person name="Lemos M.V.F."/>
            <person name="Marino C.L."/>
            <person name="Nunes L.R."/>
            <person name="de Oliveira R.C."/>
            <person name="Pereira G.G."/>
            <person name="Reis M.S."/>
            <person name="Schriefer A."/>
            <person name="Siqueira W.J."/>
            <person name="Sommer P."/>
            <person name="Tsai S.M."/>
            <person name="Simpson A.J.G."/>
            <person name="Ferro J.A."/>
            <person name="Camargo L.E.A."/>
            <person name="Kitajima J.P."/>
            <person name="Setubal J.C."/>
            <person name="Van Sluys M.A."/>
        </authorList>
    </citation>
    <scope>NUCLEOTIDE SEQUENCE [LARGE SCALE GENOMIC DNA]</scope>
    <source>
        <strain>Fiocruz L1-130</strain>
    </source>
</reference>
<dbReference type="EC" id="2.7.7.6" evidence="1"/>
<dbReference type="EMBL" id="AE016823">
    <property type="protein sequence ID" value="AAS71399.1"/>
    <property type="molecule type" value="Genomic_DNA"/>
</dbReference>
<dbReference type="RefSeq" id="WP_000054108.1">
    <property type="nucleotide sequence ID" value="NC_005823.1"/>
</dbReference>
<dbReference type="SMR" id="Q72NI8"/>
<dbReference type="KEGG" id="lic:LIC_12846"/>
<dbReference type="HOGENOM" id="CLU_053084_0_1_12"/>
<dbReference type="Proteomes" id="UP000007037">
    <property type="component" value="Chromosome I"/>
</dbReference>
<dbReference type="GO" id="GO:0005737">
    <property type="term" value="C:cytoplasm"/>
    <property type="evidence" value="ECO:0007669"/>
    <property type="project" value="UniProtKB-ARBA"/>
</dbReference>
<dbReference type="GO" id="GO:0000428">
    <property type="term" value="C:DNA-directed RNA polymerase complex"/>
    <property type="evidence" value="ECO:0007669"/>
    <property type="project" value="UniProtKB-KW"/>
</dbReference>
<dbReference type="GO" id="GO:0003677">
    <property type="term" value="F:DNA binding"/>
    <property type="evidence" value="ECO:0007669"/>
    <property type="project" value="UniProtKB-UniRule"/>
</dbReference>
<dbReference type="GO" id="GO:0003899">
    <property type="term" value="F:DNA-directed RNA polymerase activity"/>
    <property type="evidence" value="ECO:0007669"/>
    <property type="project" value="UniProtKB-UniRule"/>
</dbReference>
<dbReference type="GO" id="GO:0046983">
    <property type="term" value="F:protein dimerization activity"/>
    <property type="evidence" value="ECO:0007669"/>
    <property type="project" value="InterPro"/>
</dbReference>
<dbReference type="GO" id="GO:0006351">
    <property type="term" value="P:DNA-templated transcription"/>
    <property type="evidence" value="ECO:0007669"/>
    <property type="project" value="UniProtKB-UniRule"/>
</dbReference>
<dbReference type="CDD" id="cd06928">
    <property type="entry name" value="RNAP_alpha_NTD"/>
    <property type="match status" value="1"/>
</dbReference>
<dbReference type="FunFam" id="1.10.150.20:FF:000047">
    <property type="entry name" value="DNA-directed RNA polymerase subunit alpha"/>
    <property type="match status" value="1"/>
</dbReference>
<dbReference type="FunFam" id="2.170.120.12:FF:000001">
    <property type="entry name" value="DNA-directed RNA polymerase subunit alpha"/>
    <property type="match status" value="1"/>
</dbReference>
<dbReference type="Gene3D" id="1.10.150.20">
    <property type="entry name" value="5' to 3' exonuclease, C-terminal subdomain"/>
    <property type="match status" value="1"/>
</dbReference>
<dbReference type="Gene3D" id="2.170.120.12">
    <property type="entry name" value="DNA-directed RNA polymerase, insert domain"/>
    <property type="match status" value="1"/>
</dbReference>
<dbReference type="Gene3D" id="3.30.1360.10">
    <property type="entry name" value="RNA polymerase, RBP11-like subunit"/>
    <property type="match status" value="1"/>
</dbReference>
<dbReference type="HAMAP" id="MF_00059">
    <property type="entry name" value="RNApol_bact_RpoA"/>
    <property type="match status" value="1"/>
</dbReference>
<dbReference type="InterPro" id="IPR011262">
    <property type="entry name" value="DNA-dir_RNA_pol_insert"/>
</dbReference>
<dbReference type="InterPro" id="IPR011263">
    <property type="entry name" value="DNA-dir_RNA_pol_RpoA/D/Rpb3"/>
</dbReference>
<dbReference type="InterPro" id="IPR011773">
    <property type="entry name" value="DNA-dir_RpoA"/>
</dbReference>
<dbReference type="InterPro" id="IPR036603">
    <property type="entry name" value="RBP11-like"/>
</dbReference>
<dbReference type="InterPro" id="IPR011260">
    <property type="entry name" value="RNAP_asu_C"/>
</dbReference>
<dbReference type="InterPro" id="IPR036643">
    <property type="entry name" value="RNApol_insert_sf"/>
</dbReference>
<dbReference type="NCBIfam" id="NF003513">
    <property type="entry name" value="PRK05182.1-2"/>
    <property type="match status" value="1"/>
</dbReference>
<dbReference type="NCBIfam" id="NF003519">
    <property type="entry name" value="PRK05182.2-5"/>
    <property type="match status" value="1"/>
</dbReference>
<dbReference type="NCBIfam" id="TIGR02027">
    <property type="entry name" value="rpoA"/>
    <property type="match status" value="1"/>
</dbReference>
<dbReference type="Pfam" id="PF01000">
    <property type="entry name" value="RNA_pol_A_bac"/>
    <property type="match status" value="1"/>
</dbReference>
<dbReference type="Pfam" id="PF03118">
    <property type="entry name" value="RNA_pol_A_CTD"/>
    <property type="match status" value="1"/>
</dbReference>
<dbReference type="Pfam" id="PF01193">
    <property type="entry name" value="RNA_pol_L"/>
    <property type="match status" value="1"/>
</dbReference>
<dbReference type="SMART" id="SM00662">
    <property type="entry name" value="RPOLD"/>
    <property type="match status" value="1"/>
</dbReference>
<dbReference type="SUPFAM" id="SSF47789">
    <property type="entry name" value="C-terminal domain of RNA polymerase alpha subunit"/>
    <property type="match status" value="1"/>
</dbReference>
<dbReference type="SUPFAM" id="SSF56553">
    <property type="entry name" value="Insert subdomain of RNA polymerase alpha subunit"/>
    <property type="match status" value="1"/>
</dbReference>
<dbReference type="SUPFAM" id="SSF55257">
    <property type="entry name" value="RBP11-like subunits of RNA polymerase"/>
    <property type="match status" value="1"/>
</dbReference>
<sequence>MSLKSLLKGFKRPKKIEFNTEANTPNYGKFVAEPFERGFATTIGNSLRRTLMSSIEGAAISAIRIEGVNHEFSFIEGVAEDVTRIILNLKQVRIKYEPEEKDQSKIIHLELKGAGYFRAGDLAVDSSIEIMNPDLHIATLNEDANLVMDLEIQRGRGYVPAEEKKKDIEVLGTIPVDSIFSPVQKVVFEVSETRVAQRSDYEKLTLEVWTDGSVSPDDAVAQAAKILKEHLTVFINFEEELEEEDDELDEADEKLKASLSKHVEELELSVRSLNVLRSLEIDFIGDLVKRSEEEMSKSKHYSDQCLQELKVKLSTLGLSFGMRDF</sequence>
<gene>
    <name evidence="1" type="primary">rpoA</name>
    <name type="ordered locus">LIC_12846</name>
</gene>
<feature type="chain" id="PRO_0000175326" description="DNA-directed RNA polymerase subunit alpha">
    <location>
        <begin position="1"/>
        <end position="325"/>
    </location>
</feature>
<feature type="region of interest" description="Alpha N-terminal domain (alpha-NTD)" evidence="1">
    <location>
        <begin position="1"/>
        <end position="238"/>
    </location>
</feature>
<feature type="region of interest" description="Alpha C-terminal domain (alpha-CTD)" evidence="1">
    <location>
        <begin position="255"/>
        <end position="325"/>
    </location>
</feature>
<keyword id="KW-0240">DNA-directed RNA polymerase</keyword>
<keyword id="KW-0548">Nucleotidyltransferase</keyword>
<keyword id="KW-0804">Transcription</keyword>
<keyword id="KW-0808">Transferase</keyword>
<protein>
    <recommendedName>
        <fullName evidence="1">DNA-directed RNA polymerase subunit alpha</fullName>
        <shortName evidence="1">RNAP subunit alpha</shortName>
        <ecNumber evidence="1">2.7.7.6</ecNumber>
    </recommendedName>
    <alternativeName>
        <fullName evidence="1">RNA polymerase subunit alpha</fullName>
    </alternativeName>
    <alternativeName>
        <fullName evidence="1">Transcriptase subunit alpha</fullName>
    </alternativeName>
</protein>
<name>RPOA_LEPIC</name>
<proteinExistence type="inferred from homology"/>
<accession>Q72NI8</accession>
<organism>
    <name type="scientific">Leptospira interrogans serogroup Icterohaemorrhagiae serovar copenhageni (strain Fiocruz L1-130)</name>
    <dbReference type="NCBI Taxonomy" id="267671"/>
    <lineage>
        <taxon>Bacteria</taxon>
        <taxon>Pseudomonadati</taxon>
        <taxon>Spirochaetota</taxon>
        <taxon>Spirochaetia</taxon>
        <taxon>Leptospirales</taxon>
        <taxon>Leptospiraceae</taxon>
        <taxon>Leptospira</taxon>
    </lineage>
</organism>